<evidence type="ECO:0000255" key="1">
    <source>
        <dbReference type="HAMAP-Rule" id="MF_00069"/>
    </source>
</evidence>
<organism>
    <name type="scientific">Shewanella putrefaciens (strain CN-32 / ATCC BAA-453)</name>
    <dbReference type="NCBI Taxonomy" id="319224"/>
    <lineage>
        <taxon>Bacteria</taxon>
        <taxon>Pseudomonadati</taxon>
        <taxon>Pseudomonadota</taxon>
        <taxon>Gammaproteobacteria</taxon>
        <taxon>Alteromonadales</taxon>
        <taxon>Shewanellaceae</taxon>
        <taxon>Shewanella</taxon>
    </lineage>
</organism>
<comment type="function">
    <text evidence="1">Catalyzes the reduction of hydroxylamine to form NH(3) and H(2)O.</text>
</comment>
<comment type="catalytic activity">
    <reaction evidence="1">
        <text>A + NH4(+) + H2O = hydroxylamine + AH2 + H(+)</text>
        <dbReference type="Rhea" id="RHEA:22052"/>
        <dbReference type="ChEBI" id="CHEBI:13193"/>
        <dbReference type="ChEBI" id="CHEBI:15377"/>
        <dbReference type="ChEBI" id="CHEBI:15378"/>
        <dbReference type="ChEBI" id="CHEBI:15429"/>
        <dbReference type="ChEBI" id="CHEBI:17499"/>
        <dbReference type="ChEBI" id="CHEBI:28938"/>
        <dbReference type="EC" id="1.7.99.1"/>
    </reaction>
</comment>
<comment type="cofactor">
    <cofactor evidence="1">
        <name>[2Fe-2S] cluster</name>
        <dbReference type="ChEBI" id="CHEBI:190135"/>
    </cofactor>
    <text evidence="1">Binds 1 [2Fe-2S] cluster.</text>
</comment>
<comment type="cofactor">
    <cofactor evidence="1">
        <name>hybrid [4Fe-2O-2S] cluster</name>
        <dbReference type="ChEBI" id="CHEBI:60519"/>
    </cofactor>
    <text evidence="1">Binds 1 hybrid [4Fe-2O-2S] cluster.</text>
</comment>
<comment type="subcellular location">
    <subcellularLocation>
        <location evidence="1">Cytoplasm</location>
    </subcellularLocation>
</comment>
<comment type="similarity">
    <text evidence="1">Belongs to the HCP family.</text>
</comment>
<keyword id="KW-0001">2Fe-2S</keyword>
<keyword id="KW-0963">Cytoplasm</keyword>
<keyword id="KW-0408">Iron</keyword>
<keyword id="KW-0411">Iron-sulfur</keyword>
<keyword id="KW-0479">Metal-binding</keyword>
<keyword id="KW-0560">Oxidoreductase</keyword>
<feature type="chain" id="PRO_1000009167" description="Hydroxylamine reductase">
    <location>
        <begin position="1"/>
        <end position="554"/>
    </location>
</feature>
<feature type="binding site" evidence="1">
    <location>
        <position position="3"/>
    </location>
    <ligand>
        <name>[2Fe-2S] cluster</name>
        <dbReference type="ChEBI" id="CHEBI:190135"/>
    </ligand>
</feature>
<feature type="binding site" evidence="1">
    <location>
        <position position="6"/>
    </location>
    <ligand>
        <name>[2Fe-2S] cluster</name>
        <dbReference type="ChEBI" id="CHEBI:190135"/>
    </ligand>
</feature>
<feature type="binding site" evidence="1">
    <location>
        <position position="18"/>
    </location>
    <ligand>
        <name>[2Fe-2S] cluster</name>
        <dbReference type="ChEBI" id="CHEBI:190135"/>
    </ligand>
</feature>
<feature type="binding site" evidence="1">
    <location>
        <position position="25"/>
    </location>
    <ligand>
        <name>[2Fe-2S] cluster</name>
        <dbReference type="ChEBI" id="CHEBI:190135"/>
    </ligand>
</feature>
<feature type="binding site" evidence="1">
    <location>
        <position position="252"/>
    </location>
    <ligand>
        <name>hybrid [4Fe-2O-2S] cluster</name>
        <dbReference type="ChEBI" id="CHEBI:60519"/>
    </ligand>
</feature>
<feature type="binding site" evidence="1">
    <location>
        <position position="276"/>
    </location>
    <ligand>
        <name>hybrid [4Fe-2O-2S] cluster</name>
        <dbReference type="ChEBI" id="CHEBI:60519"/>
    </ligand>
</feature>
<feature type="binding site" evidence="1">
    <location>
        <position position="320"/>
    </location>
    <ligand>
        <name>hybrid [4Fe-2O-2S] cluster</name>
        <dbReference type="ChEBI" id="CHEBI:60519"/>
    </ligand>
</feature>
<feature type="binding site" description="via persulfide group" evidence="1">
    <location>
        <position position="408"/>
    </location>
    <ligand>
        <name>hybrid [4Fe-2O-2S] cluster</name>
        <dbReference type="ChEBI" id="CHEBI:60519"/>
    </ligand>
</feature>
<feature type="binding site" evidence="1">
    <location>
        <position position="436"/>
    </location>
    <ligand>
        <name>hybrid [4Fe-2O-2S] cluster</name>
        <dbReference type="ChEBI" id="CHEBI:60519"/>
    </ligand>
</feature>
<feature type="binding site" evidence="1">
    <location>
        <position position="461"/>
    </location>
    <ligand>
        <name>hybrid [4Fe-2O-2S] cluster</name>
        <dbReference type="ChEBI" id="CHEBI:60519"/>
    </ligand>
</feature>
<feature type="binding site" evidence="1">
    <location>
        <position position="495"/>
    </location>
    <ligand>
        <name>hybrid [4Fe-2O-2S] cluster</name>
        <dbReference type="ChEBI" id="CHEBI:60519"/>
    </ligand>
</feature>
<feature type="binding site" evidence="1">
    <location>
        <position position="497"/>
    </location>
    <ligand>
        <name>hybrid [4Fe-2O-2S] cluster</name>
        <dbReference type="ChEBI" id="CHEBI:60519"/>
    </ligand>
</feature>
<feature type="modified residue" description="Cysteine persulfide" evidence="1">
    <location>
        <position position="408"/>
    </location>
</feature>
<gene>
    <name evidence="1" type="primary">hcp</name>
    <name type="ordered locus">Sputcn32_1174</name>
</gene>
<name>HCP_SHEPC</name>
<sequence length="554" mass="60335">MFCIQCEQTIRTPAGNGCSYSQGMCGKLAATSDLQDLLIYMLQGVSVYAVKARELGIVDAEIDSFVPKAFFSTLTNVNFDDERIVAYAQQAAKYRASLKAAYELACERAGKVAEQVPEVAQLVLGTSKVEMLSQAPIALLNKDKHEIHEDILGLRLLCLYGLKGAAAYMEHARVLDQTDAEVAGRFHEIMAFLGESSVDGDKLFATAMEIGQLNYRIMAMLDAGETQSFGHPEPTVVNTKSVKGKAILVSGHDMKDLELILEQTVGKGINVYTHGEMLPALAYPAFKKYPHLVGNYGSAWQNQQKEFANFPGAVVMTSNCIIDPNVGSYSDRIFTRSIVGWPGVMHIIGDDFSAVIDKALALEGFNYDEIPHKITIGFARNALMAAAPAVVENVKNGSIKHFFLVGGCDGDKADRSYFTELAKSTPKDSIILTLGCGKYKFNKLEFGDINGIPRLLDVGQCNDAYSAIQLAIALAEVFECDINELPLSLVLSWFEQKAIVVLLTLLSLGVKNIRTGPTPPAFLTANLAKILEDKFGLRNTTTVEADLKTMLNVA</sequence>
<proteinExistence type="inferred from homology"/>
<reference key="1">
    <citation type="submission" date="2007-04" db="EMBL/GenBank/DDBJ databases">
        <title>Complete sequence of Shewanella putrefaciens CN-32.</title>
        <authorList>
            <consortium name="US DOE Joint Genome Institute"/>
            <person name="Copeland A."/>
            <person name="Lucas S."/>
            <person name="Lapidus A."/>
            <person name="Barry K."/>
            <person name="Detter J.C."/>
            <person name="Glavina del Rio T."/>
            <person name="Hammon N."/>
            <person name="Israni S."/>
            <person name="Dalin E."/>
            <person name="Tice H."/>
            <person name="Pitluck S."/>
            <person name="Chain P."/>
            <person name="Malfatti S."/>
            <person name="Shin M."/>
            <person name="Vergez L."/>
            <person name="Schmutz J."/>
            <person name="Larimer F."/>
            <person name="Land M."/>
            <person name="Hauser L."/>
            <person name="Kyrpides N."/>
            <person name="Mikhailova N."/>
            <person name="Romine M.F."/>
            <person name="Fredrickson J."/>
            <person name="Tiedje J."/>
            <person name="Richardson P."/>
        </authorList>
    </citation>
    <scope>NUCLEOTIDE SEQUENCE [LARGE SCALE GENOMIC DNA]</scope>
    <source>
        <strain>CN-32 / ATCC BAA-453</strain>
    </source>
</reference>
<accession>A4Y4L9</accession>
<protein>
    <recommendedName>
        <fullName evidence="1">Hydroxylamine reductase</fullName>
        <ecNumber evidence="1">1.7.99.1</ecNumber>
    </recommendedName>
    <alternativeName>
        <fullName evidence="1">Hybrid-cluster protein</fullName>
        <shortName evidence="1">HCP</shortName>
    </alternativeName>
    <alternativeName>
        <fullName evidence="1">Prismane protein</fullName>
    </alternativeName>
</protein>
<dbReference type="EC" id="1.7.99.1" evidence="1"/>
<dbReference type="EMBL" id="CP000681">
    <property type="protein sequence ID" value="ABP74902.1"/>
    <property type="molecule type" value="Genomic_DNA"/>
</dbReference>
<dbReference type="SMR" id="A4Y4L9"/>
<dbReference type="STRING" id="319224.Sputcn32_1174"/>
<dbReference type="KEGG" id="spc:Sputcn32_1174"/>
<dbReference type="eggNOG" id="COG1151">
    <property type="taxonomic scope" value="Bacteria"/>
</dbReference>
<dbReference type="HOGENOM" id="CLU_038344_2_0_6"/>
<dbReference type="GO" id="GO:0005737">
    <property type="term" value="C:cytoplasm"/>
    <property type="evidence" value="ECO:0007669"/>
    <property type="project" value="UniProtKB-SubCell"/>
</dbReference>
<dbReference type="GO" id="GO:0051537">
    <property type="term" value="F:2 iron, 2 sulfur cluster binding"/>
    <property type="evidence" value="ECO:0007669"/>
    <property type="project" value="UniProtKB-KW"/>
</dbReference>
<dbReference type="GO" id="GO:0050418">
    <property type="term" value="F:hydroxylamine reductase activity"/>
    <property type="evidence" value="ECO:0007669"/>
    <property type="project" value="UniProtKB-UniRule"/>
</dbReference>
<dbReference type="GO" id="GO:0046872">
    <property type="term" value="F:metal ion binding"/>
    <property type="evidence" value="ECO:0007669"/>
    <property type="project" value="UniProtKB-KW"/>
</dbReference>
<dbReference type="GO" id="GO:0004601">
    <property type="term" value="F:peroxidase activity"/>
    <property type="evidence" value="ECO:0007669"/>
    <property type="project" value="TreeGrafter"/>
</dbReference>
<dbReference type="GO" id="GO:0042542">
    <property type="term" value="P:response to hydrogen peroxide"/>
    <property type="evidence" value="ECO:0007669"/>
    <property type="project" value="TreeGrafter"/>
</dbReference>
<dbReference type="CDD" id="cd01914">
    <property type="entry name" value="HCP"/>
    <property type="match status" value="1"/>
</dbReference>
<dbReference type="FunFam" id="1.20.1270.20:FF:000001">
    <property type="entry name" value="Hydroxylamine reductase"/>
    <property type="match status" value="1"/>
</dbReference>
<dbReference type="FunFam" id="1.20.1270.20:FF:000002">
    <property type="entry name" value="Hydroxylamine reductase"/>
    <property type="match status" value="1"/>
</dbReference>
<dbReference type="FunFam" id="3.40.50.2030:FF:000001">
    <property type="entry name" value="Hydroxylamine reductase"/>
    <property type="match status" value="1"/>
</dbReference>
<dbReference type="FunFam" id="3.40.50.2030:FF:000002">
    <property type="entry name" value="Hydroxylamine reductase"/>
    <property type="match status" value="1"/>
</dbReference>
<dbReference type="Gene3D" id="1.20.1270.20">
    <property type="match status" value="2"/>
</dbReference>
<dbReference type="Gene3D" id="3.40.50.2030">
    <property type="match status" value="2"/>
</dbReference>
<dbReference type="HAMAP" id="MF_00069">
    <property type="entry name" value="Hydroxylam_reduct"/>
    <property type="match status" value="1"/>
</dbReference>
<dbReference type="InterPro" id="IPR004137">
    <property type="entry name" value="HCP/CODH"/>
</dbReference>
<dbReference type="InterPro" id="IPR010048">
    <property type="entry name" value="Hydroxylam_reduct"/>
</dbReference>
<dbReference type="InterPro" id="IPR016099">
    <property type="entry name" value="Prismane-like_a/b-sand"/>
</dbReference>
<dbReference type="InterPro" id="IPR011254">
    <property type="entry name" value="Prismane-like_sf"/>
</dbReference>
<dbReference type="InterPro" id="IPR016100">
    <property type="entry name" value="Prismane_a-bundle"/>
</dbReference>
<dbReference type="NCBIfam" id="TIGR01703">
    <property type="entry name" value="hybrid_clust"/>
    <property type="match status" value="1"/>
</dbReference>
<dbReference type="NCBIfam" id="NF003658">
    <property type="entry name" value="PRK05290.1"/>
    <property type="match status" value="1"/>
</dbReference>
<dbReference type="PANTHER" id="PTHR30109">
    <property type="entry name" value="HYDROXYLAMINE REDUCTASE"/>
    <property type="match status" value="1"/>
</dbReference>
<dbReference type="PANTHER" id="PTHR30109:SF0">
    <property type="entry name" value="HYDROXYLAMINE REDUCTASE"/>
    <property type="match status" value="1"/>
</dbReference>
<dbReference type="Pfam" id="PF03063">
    <property type="entry name" value="Prismane"/>
    <property type="match status" value="1"/>
</dbReference>
<dbReference type="PIRSF" id="PIRSF000076">
    <property type="entry name" value="HCP"/>
    <property type="match status" value="1"/>
</dbReference>
<dbReference type="SUPFAM" id="SSF56821">
    <property type="entry name" value="Prismane protein-like"/>
    <property type="match status" value="1"/>
</dbReference>